<organism>
    <name type="scientific">Citrobacter koseri (strain ATCC BAA-895 / CDC 4225-83 / SGSC4696)</name>
    <dbReference type="NCBI Taxonomy" id="290338"/>
    <lineage>
        <taxon>Bacteria</taxon>
        <taxon>Pseudomonadati</taxon>
        <taxon>Pseudomonadota</taxon>
        <taxon>Gammaproteobacteria</taxon>
        <taxon>Enterobacterales</taxon>
        <taxon>Enterobacteriaceae</taxon>
        <taxon>Citrobacter</taxon>
    </lineage>
</organism>
<evidence type="ECO:0000255" key="1">
    <source>
        <dbReference type="HAMAP-Rule" id="MF_01832"/>
    </source>
</evidence>
<comment type="function">
    <text evidence="1">Participates in cysteine desulfuration mediated by SufS. Cysteine desulfuration mobilizes sulfur from L-cysteine to yield L-alanine and constitutes an essential step in sulfur metabolism for biosynthesis of a variety of sulfur-containing biomolecules. Functions as a sulfur acceptor for SufS, by mediating the direct transfer of the sulfur atom from the S-sulfanylcysteine of SufS, an intermediate product of cysteine desulfuration process.</text>
</comment>
<comment type="pathway">
    <text evidence="1">Cofactor biosynthesis; iron-sulfur cluster biosynthesis.</text>
</comment>
<comment type="subunit">
    <text evidence="1">Homodimer. Interacts with SufS.</text>
</comment>
<comment type="subcellular location">
    <subcellularLocation>
        <location evidence="1">Cytoplasm</location>
    </subcellularLocation>
</comment>
<comment type="similarity">
    <text evidence="1">Belongs to the SufE family.</text>
</comment>
<sequence>MAALPDKERLLRNFQRCANWEEKYLYIIELGQRLAELNEQDRHSENSIQGCQSQVWIVMRQNADGVIELQGDSDAAIVKGLIAIVFILYHQMTPQDIVNFDVRPWFEKMALTQHLTPSRSQGLEAMIRAIRARAATLS</sequence>
<protein>
    <recommendedName>
        <fullName evidence="1">Cysteine desulfuration protein SufE</fullName>
    </recommendedName>
</protein>
<feature type="chain" id="PRO_1000070435" description="Cysteine desulfuration protein SufE">
    <location>
        <begin position="1"/>
        <end position="138"/>
    </location>
</feature>
<feature type="active site" description="Cysteine persulfide intermediate" evidence="1">
    <location>
        <position position="51"/>
    </location>
</feature>
<name>SUFE_CITK8</name>
<dbReference type="EMBL" id="CP000822">
    <property type="protein sequence ID" value="ABV12842.1"/>
    <property type="molecule type" value="Genomic_DNA"/>
</dbReference>
<dbReference type="RefSeq" id="WP_012132581.1">
    <property type="nucleotide sequence ID" value="NC_009792.1"/>
</dbReference>
<dbReference type="SMR" id="A8AH79"/>
<dbReference type="STRING" id="290338.CKO_01712"/>
<dbReference type="GeneID" id="45135742"/>
<dbReference type="KEGG" id="cko:CKO_01712"/>
<dbReference type="HOGENOM" id="CLU_124502_1_1_6"/>
<dbReference type="OrthoDB" id="9799320at2"/>
<dbReference type="UniPathway" id="UPA00266"/>
<dbReference type="Proteomes" id="UP000008148">
    <property type="component" value="Chromosome"/>
</dbReference>
<dbReference type="GO" id="GO:0005737">
    <property type="term" value="C:cytoplasm"/>
    <property type="evidence" value="ECO:0007669"/>
    <property type="project" value="UniProtKB-SubCell"/>
</dbReference>
<dbReference type="GO" id="GO:0016226">
    <property type="term" value="P:iron-sulfur cluster assembly"/>
    <property type="evidence" value="ECO:0007669"/>
    <property type="project" value="InterPro"/>
</dbReference>
<dbReference type="GO" id="GO:0006790">
    <property type="term" value="P:sulfur compound metabolic process"/>
    <property type="evidence" value="ECO:0007669"/>
    <property type="project" value="InterPro"/>
</dbReference>
<dbReference type="Gene3D" id="3.90.1010.10">
    <property type="match status" value="1"/>
</dbReference>
<dbReference type="HAMAP" id="MF_01832">
    <property type="entry name" value="SufE"/>
    <property type="match status" value="1"/>
</dbReference>
<dbReference type="InterPro" id="IPR023939">
    <property type="entry name" value="Cysteine_desulfuration_SufE"/>
</dbReference>
<dbReference type="InterPro" id="IPR003808">
    <property type="entry name" value="Fe-S_metab-assoc_dom"/>
</dbReference>
<dbReference type="NCBIfam" id="NF006792">
    <property type="entry name" value="PRK09296.1"/>
    <property type="match status" value="1"/>
</dbReference>
<dbReference type="PANTHER" id="PTHR43597:SF3">
    <property type="entry name" value="CYSTEINE DESULFURATION PROTEIN SUFE"/>
    <property type="match status" value="1"/>
</dbReference>
<dbReference type="PANTHER" id="PTHR43597">
    <property type="entry name" value="SULFUR ACCEPTOR PROTEIN CSDE"/>
    <property type="match status" value="1"/>
</dbReference>
<dbReference type="Pfam" id="PF02657">
    <property type="entry name" value="SufE"/>
    <property type="match status" value="1"/>
</dbReference>
<dbReference type="SUPFAM" id="SSF82649">
    <property type="entry name" value="SufE/NifU"/>
    <property type="match status" value="1"/>
</dbReference>
<proteinExistence type="inferred from homology"/>
<accession>A8AH79</accession>
<keyword id="KW-0963">Cytoplasm</keyword>
<keyword id="KW-1185">Reference proteome</keyword>
<reference key="1">
    <citation type="submission" date="2007-08" db="EMBL/GenBank/DDBJ databases">
        <authorList>
            <consortium name="The Citrobacter koseri Genome Sequencing Project"/>
            <person name="McClelland M."/>
            <person name="Sanderson E.K."/>
            <person name="Porwollik S."/>
            <person name="Spieth J."/>
            <person name="Clifton W.S."/>
            <person name="Latreille P."/>
            <person name="Courtney L."/>
            <person name="Wang C."/>
            <person name="Pepin K."/>
            <person name="Bhonagiri V."/>
            <person name="Nash W."/>
            <person name="Johnson M."/>
            <person name="Thiruvilangam P."/>
            <person name="Wilson R."/>
        </authorList>
    </citation>
    <scope>NUCLEOTIDE SEQUENCE [LARGE SCALE GENOMIC DNA]</scope>
    <source>
        <strain>ATCC BAA-895 / CDC 4225-83 / SGSC4696</strain>
    </source>
</reference>
<gene>
    <name evidence="1" type="primary">sufE</name>
    <name type="ordered locus">CKO_01712</name>
</gene>